<sequence length="282" mass="30213">MAITAAQVKELRDRTGAGMMDCKKALTETDGDIELAIDSMRKSGAAKAAKKAGNIAAEGTILIKNGEGYAALLEVNCQTDFVAKDANFLAFANAVLEVAAASKVTIEDLKAQFEETRIALVTKIGENINVRRVEYIDGANLASYRHGERIGVVVAGEADEETLKHVAMHVAASKPEFVNPEDVPADLVERERALQIEIAMNEGKPAEIAEKMVFGRMKKFTGEISLTGQAYIMEPKKTVGAILKEKGATVSNFVRLEVGEGIAKKEEDFAAEVAAQIAATKA</sequence>
<feature type="chain" id="PRO_1000074881" description="Elongation factor Ts">
    <location>
        <begin position="1"/>
        <end position="282"/>
    </location>
</feature>
<feature type="region of interest" description="Involved in Mg(2+) ion dislocation from EF-Tu" evidence="1">
    <location>
        <begin position="79"/>
        <end position="82"/>
    </location>
</feature>
<reference key="1">
    <citation type="submission" date="2007-08" db="EMBL/GenBank/DDBJ databases">
        <title>Complete sequence of Shewanella sediminis HAW-EB3.</title>
        <authorList>
            <consortium name="US DOE Joint Genome Institute"/>
            <person name="Copeland A."/>
            <person name="Lucas S."/>
            <person name="Lapidus A."/>
            <person name="Barry K."/>
            <person name="Glavina del Rio T."/>
            <person name="Dalin E."/>
            <person name="Tice H."/>
            <person name="Pitluck S."/>
            <person name="Chertkov O."/>
            <person name="Brettin T."/>
            <person name="Bruce D."/>
            <person name="Detter J.C."/>
            <person name="Han C."/>
            <person name="Schmutz J."/>
            <person name="Larimer F."/>
            <person name="Land M."/>
            <person name="Hauser L."/>
            <person name="Kyrpides N."/>
            <person name="Kim E."/>
            <person name="Zhao J.-S."/>
            <person name="Richardson P."/>
        </authorList>
    </citation>
    <scope>NUCLEOTIDE SEQUENCE [LARGE SCALE GENOMIC DNA]</scope>
    <source>
        <strain>HAW-EB3</strain>
    </source>
</reference>
<comment type="function">
    <text evidence="1">Associates with the EF-Tu.GDP complex and induces the exchange of GDP to GTP. It remains bound to the aminoacyl-tRNA.EF-Tu.GTP complex up to the GTP hydrolysis stage on the ribosome.</text>
</comment>
<comment type="subcellular location">
    <subcellularLocation>
        <location evidence="1">Cytoplasm</location>
    </subcellularLocation>
</comment>
<comment type="similarity">
    <text evidence="1">Belongs to the EF-Ts family.</text>
</comment>
<evidence type="ECO:0000255" key="1">
    <source>
        <dbReference type="HAMAP-Rule" id="MF_00050"/>
    </source>
</evidence>
<keyword id="KW-0963">Cytoplasm</keyword>
<keyword id="KW-0251">Elongation factor</keyword>
<keyword id="KW-0648">Protein biosynthesis</keyword>
<keyword id="KW-1185">Reference proteome</keyword>
<organism>
    <name type="scientific">Shewanella sediminis (strain HAW-EB3)</name>
    <dbReference type="NCBI Taxonomy" id="425104"/>
    <lineage>
        <taxon>Bacteria</taxon>
        <taxon>Pseudomonadati</taxon>
        <taxon>Pseudomonadota</taxon>
        <taxon>Gammaproteobacteria</taxon>
        <taxon>Alteromonadales</taxon>
        <taxon>Shewanellaceae</taxon>
        <taxon>Shewanella</taxon>
    </lineage>
</organism>
<protein>
    <recommendedName>
        <fullName evidence="1">Elongation factor Ts</fullName>
        <shortName evidence="1">EF-Ts</shortName>
    </recommendedName>
</protein>
<proteinExistence type="inferred from homology"/>
<accession>A8FY41</accession>
<name>EFTS_SHESH</name>
<dbReference type="EMBL" id="CP000821">
    <property type="protein sequence ID" value="ABV37764.1"/>
    <property type="molecule type" value="Genomic_DNA"/>
</dbReference>
<dbReference type="RefSeq" id="WP_012143494.1">
    <property type="nucleotide sequence ID" value="NC_009831.1"/>
</dbReference>
<dbReference type="SMR" id="A8FY41"/>
<dbReference type="STRING" id="425104.Ssed_3160"/>
<dbReference type="KEGG" id="sse:Ssed_3160"/>
<dbReference type="eggNOG" id="COG0264">
    <property type="taxonomic scope" value="Bacteria"/>
</dbReference>
<dbReference type="HOGENOM" id="CLU_047155_0_2_6"/>
<dbReference type="OrthoDB" id="9808348at2"/>
<dbReference type="Proteomes" id="UP000002015">
    <property type="component" value="Chromosome"/>
</dbReference>
<dbReference type="GO" id="GO:0005737">
    <property type="term" value="C:cytoplasm"/>
    <property type="evidence" value="ECO:0007669"/>
    <property type="project" value="UniProtKB-SubCell"/>
</dbReference>
<dbReference type="GO" id="GO:0003746">
    <property type="term" value="F:translation elongation factor activity"/>
    <property type="evidence" value="ECO:0007669"/>
    <property type="project" value="UniProtKB-UniRule"/>
</dbReference>
<dbReference type="CDD" id="cd14275">
    <property type="entry name" value="UBA_EF-Ts"/>
    <property type="match status" value="1"/>
</dbReference>
<dbReference type="FunFam" id="1.10.286.20:FF:000001">
    <property type="entry name" value="Elongation factor Ts"/>
    <property type="match status" value="1"/>
</dbReference>
<dbReference type="FunFam" id="1.10.8.10:FF:000001">
    <property type="entry name" value="Elongation factor Ts"/>
    <property type="match status" value="1"/>
</dbReference>
<dbReference type="FunFam" id="3.30.479.20:FF:000001">
    <property type="entry name" value="Elongation factor Ts"/>
    <property type="match status" value="1"/>
</dbReference>
<dbReference type="Gene3D" id="1.10.286.20">
    <property type="match status" value="1"/>
</dbReference>
<dbReference type="Gene3D" id="1.10.8.10">
    <property type="entry name" value="DNA helicase RuvA subunit, C-terminal domain"/>
    <property type="match status" value="1"/>
</dbReference>
<dbReference type="Gene3D" id="3.30.479.20">
    <property type="entry name" value="Elongation factor Ts, dimerisation domain"/>
    <property type="match status" value="2"/>
</dbReference>
<dbReference type="HAMAP" id="MF_00050">
    <property type="entry name" value="EF_Ts"/>
    <property type="match status" value="1"/>
</dbReference>
<dbReference type="InterPro" id="IPR036402">
    <property type="entry name" value="EF-Ts_dimer_sf"/>
</dbReference>
<dbReference type="InterPro" id="IPR001816">
    <property type="entry name" value="Transl_elong_EFTs/EF1B"/>
</dbReference>
<dbReference type="InterPro" id="IPR014039">
    <property type="entry name" value="Transl_elong_EFTs/EF1B_dimer"/>
</dbReference>
<dbReference type="InterPro" id="IPR018101">
    <property type="entry name" value="Transl_elong_Ts_CS"/>
</dbReference>
<dbReference type="InterPro" id="IPR009060">
    <property type="entry name" value="UBA-like_sf"/>
</dbReference>
<dbReference type="NCBIfam" id="TIGR00116">
    <property type="entry name" value="tsf"/>
    <property type="match status" value="1"/>
</dbReference>
<dbReference type="PANTHER" id="PTHR11741">
    <property type="entry name" value="ELONGATION FACTOR TS"/>
    <property type="match status" value="1"/>
</dbReference>
<dbReference type="PANTHER" id="PTHR11741:SF0">
    <property type="entry name" value="ELONGATION FACTOR TS, MITOCHONDRIAL"/>
    <property type="match status" value="1"/>
</dbReference>
<dbReference type="Pfam" id="PF00889">
    <property type="entry name" value="EF_TS"/>
    <property type="match status" value="1"/>
</dbReference>
<dbReference type="SUPFAM" id="SSF54713">
    <property type="entry name" value="Elongation factor Ts (EF-Ts), dimerisation domain"/>
    <property type="match status" value="2"/>
</dbReference>
<dbReference type="SUPFAM" id="SSF46934">
    <property type="entry name" value="UBA-like"/>
    <property type="match status" value="1"/>
</dbReference>
<dbReference type="PROSITE" id="PS01126">
    <property type="entry name" value="EF_TS_1"/>
    <property type="match status" value="1"/>
</dbReference>
<dbReference type="PROSITE" id="PS01127">
    <property type="entry name" value="EF_TS_2"/>
    <property type="match status" value="1"/>
</dbReference>
<gene>
    <name evidence="1" type="primary">tsf</name>
    <name type="ordered locus">Ssed_3160</name>
</gene>